<accession>B0CJ70</accession>
<comment type="function">
    <text evidence="1">Catalyzes the rearrangement of 1-deoxy-D-xylulose 5-phosphate (DXP) to produce the thiazole phosphate moiety of thiamine. Sulfur is provided by the thiocarboxylate moiety of the carrier protein ThiS. In vitro, sulfur can be provided by H(2)S.</text>
</comment>
<comment type="catalytic activity">
    <reaction evidence="1">
        <text>[ThiS sulfur-carrier protein]-C-terminal-Gly-aminoethanethioate + 2-iminoacetate + 1-deoxy-D-xylulose 5-phosphate = [ThiS sulfur-carrier protein]-C-terminal Gly-Gly + 2-[(2R,5Z)-2-carboxy-4-methylthiazol-5(2H)-ylidene]ethyl phosphate + 2 H2O + H(+)</text>
        <dbReference type="Rhea" id="RHEA:26297"/>
        <dbReference type="Rhea" id="RHEA-COMP:12909"/>
        <dbReference type="Rhea" id="RHEA-COMP:19908"/>
        <dbReference type="ChEBI" id="CHEBI:15377"/>
        <dbReference type="ChEBI" id="CHEBI:15378"/>
        <dbReference type="ChEBI" id="CHEBI:57792"/>
        <dbReference type="ChEBI" id="CHEBI:62899"/>
        <dbReference type="ChEBI" id="CHEBI:77846"/>
        <dbReference type="ChEBI" id="CHEBI:90778"/>
        <dbReference type="ChEBI" id="CHEBI:232372"/>
        <dbReference type="EC" id="2.8.1.10"/>
    </reaction>
</comment>
<comment type="pathway">
    <text evidence="1">Cofactor biosynthesis; thiamine diphosphate biosynthesis.</text>
</comment>
<comment type="subunit">
    <text evidence="1">Homotetramer. Forms heterodimers with either ThiH or ThiS.</text>
</comment>
<comment type="subcellular location">
    <subcellularLocation>
        <location evidence="1">Cytoplasm</location>
    </subcellularLocation>
</comment>
<comment type="similarity">
    <text evidence="1">Belongs to the ThiG family.</text>
</comment>
<sequence length="256" mass="27308">MLEFYGKRFESRLLLGTAQYPSPSILADAVRASLSRTVTVSLRRESGEARAGQDFWALIKALGVAVLPNTAGCHTPREAITTAHMAREVFGTNWIKLEVIGDTDTLQPDPFGLVEAARILCDEGFEVFPYMNDDLIVAERLIEAGCKVLMPWGAPIGSGRGLNNPYALKTMRAHFPDIPLVVDAGIGVPSHAAAAMELGFDAVLINTAVAKAGDPAAMARAFALAVEAGRLAYEADPIEARDMASPSTPLLGKAFL</sequence>
<name>THIG_BRUSI</name>
<protein>
    <recommendedName>
        <fullName evidence="1">Thiazole synthase</fullName>
        <ecNumber evidence="1">2.8.1.10</ecNumber>
    </recommendedName>
</protein>
<feature type="chain" id="PRO_1000080866" description="Thiazole synthase">
    <location>
        <begin position="1"/>
        <end position="256"/>
    </location>
</feature>
<feature type="active site" description="Schiff-base intermediate with DXP" evidence="1">
    <location>
        <position position="96"/>
    </location>
</feature>
<feature type="binding site" evidence="1">
    <location>
        <position position="157"/>
    </location>
    <ligand>
        <name>1-deoxy-D-xylulose 5-phosphate</name>
        <dbReference type="ChEBI" id="CHEBI:57792"/>
    </ligand>
</feature>
<feature type="binding site" evidence="1">
    <location>
        <begin position="184"/>
        <end position="185"/>
    </location>
    <ligand>
        <name>1-deoxy-D-xylulose 5-phosphate</name>
        <dbReference type="ChEBI" id="CHEBI:57792"/>
    </ligand>
</feature>
<feature type="binding site" evidence="1">
    <location>
        <begin position="206"/>
        <end position="207"/>
    </location>
    <ligand>
        <name>1-deoxy-D-xylulose 5-phosphate</name>
        <dbReference type="ChEBI" id="CHEBI:57792"/>
    </ligand>
</feature>
<evidence type="ECO:0000255" key="1">
    <source>
        <dbReference type="HAMAP-Rule" id="MF_00443"/>
    </source>
</evidence>
<dbReference type="EC" id="2.8.1.10" evidence="1"/>
<dbReference type="EMBL" id="CP000911">
    <property type="protein sequence ID" value="ABY37314.1"/>
    <property type="molecule type" value="Genomic_DNA"/>
</dbReference>
<dbReference type="RefSeq" id="WP_006072028.1">
    <property type="nucleotide sequence ID" value="NC_010169.1"/>
</dbReference>
<dbReference type="SMR" id="B0CJ70"/>
<dbReference type="KEGG" id="bmt:BSUIS_A0214"/>
<dbReference type="HOGENOM" id="CLU_062233_1_0_5"/>
<dbReference type="UniPathway" id="UPA00060"/>
<dbReference type="Proteomes" id="UP000008545">
    <property type="component" value="Chromosome I"/>
</dbReference>
<dbReference type="GO" id="GO:0005737">
    <property type="term" value="C:cytoplasm"/>
    <property type="evidence" value="ECO:0007669"/>
    <property type="project" value="UniProtKB-SubCell"/>
</dbReference>
<dbReference type="GO" id="GO:1990107">
    <property type="term" value="F:thiazole synthase activity"/>
    <property type="evidence" value="ECO:0007669"/>
    <property type="project" value="UniProtKB-EC"/>
</dbReference>
<dbReference type="GO" id="GO:0009229">
    <property type="term" value="P:thiamine diphosphate biosynthetic process"/>
    <property type="evidence" value="ECO:0007669"/>
    <property type="project" value="UniProtKB-UniRule"/>
</dbReference>
<dbReference type="CDD" id="cd04728">
    <property type="entry name" value="ThiG"/>
    <property type="match status" value="1"/>
</dbReference>
<dbReference type="Gene3D" id="3.20.20.70">
    <property type="entry name" value="Aldolase class I"/>
    <property type="match status" value="1"/>
</dbReference>
<dbReference type="HAMAP" id="MF_00443">
    <property type="entry name" value="ThiG"/>
    <property type="match status" value="1"/>
</dbReference>
<dbReference type="InterPro" id="IPR013785">
    <property type="entry name" value="Aldolase_TIM"/>
</dbReference>
<dbReference type="InterPro" id="IPR033983">
    <property type="entry name" value="Thiazole_synthase_ThiG"/>
</dbReference>
<dbReference type="InterPro" id="IPR008867">
    <property type="entry name" value="ThiG"/>
</dbReference>
<dbReference type="PANTHER" id="PTHR34266">
    <property type="entry name" value="THIAZOLE SYNTHASE"/>
    <property type="match status" value="1"/>
</dbReference>
<dbReference type="PANTHER" id="PTHR34266:SF2">
    <property type="entry name" value="THIAZOLE SYNTHASE"/>
    <property type="match status" value="1"/>
</dbReference>
<dbReference type="Pfam" id="PF05690">
    <property type="entry name" value="ThiG"/>
    <property type="match status" value="1"/>
</dbReference>
<dbReference type="SUPFAM" id="SSF110399">
    <property type="entry name" value="ThiG-like"/>
    <property type="match status" value="1"/>
</dbReference>
<keyword id="KW-0963">Cytoplasm</keyword>
<keyword id="KW-0704">Schiff base</keyword>
<keyword id="KW-0784">Thiamine biosynthesis</keyword>
<keyword id="KW-0808">Transferase</keyword>
<organism>
    <name type="scientific">Brucella suis (strain ATCC 23445 / NCTC 10510)</name>
    <dbReference type="NCBI Taxonomy" id="470137"/>
    <lineage>
        <taxon>Bacteria</taxon>
        <taxon>Pseudomonadati</taxon>
        <taxon>Pseudomonadota</taxon>
        <taxon>Alphaproteobacteria</taxon>
        <taxon>Hyphomicrobiales</taxon>
        <taxon>Brucellaceae</taxon>
        <taxon>Brucella/Ochrobactrum group</taxon>
        <taxon>Brucella</taxon>
    </lineage>
</organism>
<gene>
    <name evidence="1" type="primary">thiG</name>
    <name type="ordered locus">BSUIS_A0214</name>
</gene>
<proteinExistence type="inferred from homology"/>
<reference key="1">
    <citation type="submission" date="2007-12" db="EMBL/GenBank/DDBJ databases">
        <title>Brucella suis ATCC 23445 whole genome shotgun sequencing project.</title>
        <authorList>
            <person name="Setubal J.C."/>
            <person name="Bowns C."/>
            <person name="Boyle S."/>
            <person name="Crasta O.R."/>
            <person name="Czar M.J."/>
            <person name="Dharmanolla C."/>
            <person name="Gillespie J.J."/>
            <person name="Kenyon R.W."/>
            <person name="Lu J."/>
            <person name="Mane S."/>
            <person name="Mohapatra S."/>
            <person name="Nagrani S."/>
            <person name="Purkayastha A."/>
            <person name="Rajasimha H.K."/>
            <person name="Shallom J.M."/>
            <person name="Shallom S."/>
            <person name="Shukla M."/>
            <person name="Snyder E.E."/>
            <person name="Sobral B.W."/>
            <person name="Wattam A.R."/>
            <person name="Will R."/>
            <person name="Williams K."/>
            <person name="Yoo H."/>
            <person name="Bruce D."/>
            <person name="Detter C."/>
            <person name="Munk C."/>
            <person name="Brettin T.S."/>
        </authorList>
    </citation>
    <scope>NUCLEOTIDE SEQUENCE [LARGE SCALE GENOMIC DNA]</scope>
    <source>
        <strain>ATCC 23445 / NCTC 10510</strain>
    </source>
</reference>